<sequence>MDPRSEVLLRQAELFGGRVLLAGLPADDLLGQLAGATAWSWHAGEQQQLDKRFGGRCSFGVAPPQGVFDTAVLFLPKSRELTDYLLQTLAARLPGRPLYLVGEKRGGIERAAKQLGSFGRARKLDSARHCQLWQVEVEQAPAAPNLDALARHFTLQLADGPLEVVSLPGVFSHGRLDLGSALLLEHLDNLPGGRLLDFGCGAGILGATLKRRYPQSELVLLDVDAFAVESSRRTLAANGLEAEVIAGDGIDAAPRQLAAIISNPPFHQGVHTSYHASETLIERAAEHLQASGEMRIVANAFLRYPPLIERHLGTCQTLAERDGFRIYRAVRG</sequence>
<dbReference type="EC" id="2.1.1.172" evidence="1"/>
<dbReference type="EMBL" id="CP000304">
    <property type="protein sequence ID" value="ABP78811.1"/>
    <property type="molecule type" value="Genomic_DNA"/>
</dbReference>
<dbReference type="RefSeq" id="WP_011912299.1">
    <property type="nucleotide sequence ID" value="NC_009434.1"/>
</dbReference>
<dbReference type="SMR" id="A4VIL0"/>
<dbReference type="KEGG" id="psa:PST_1116"/>
<dbReference type="eggNOG" id="COG2813">
    <property type="taxonomic scope" value="Bacteria"/>
</dbReference>
<dbReference type="HOGENOM" id="CLU_049581_0_0_6"/>
<dbReference type="Proteomes" id="UP000000233">
    <property type="component" value="Chromosome"/>
</dbReference>
<dbReference type="GO" id="GO:0005737">
    <property type="term" value="C:cytoplasm"/>
    <property type="evidence" value="ECO:0007669"/>
    <property type="project" value="UniProtKB-SubCell"/>
</dbReference>
<dbReference type="GO" id="GO:0052914">
    <property type="term" value="F:16S rRNA (guanine(1207)-N(2))-methyltransferase activity"/>
    <property type="evidence" value="ECO:0007669"/>
    <property type="project" value="UniProtKB-EC"/>
</dbReference>
<dbReference type="GO" id="GO:0003676">
    <property type="term" value="F:nucleic acid binding"/>
    <property type="evidence" value="ECO:0007669"/>
    <property type="project" value="InterPro"/>
</dbReference>
<dbReference type="CDD" id="cd02440">
    <property type="entry name" value="AdoMet_MTases"/>
    <property type="match status" value="1"/>
</dbReference>
<dbReference type="Gene3D" id="3.40.50.150">
    <property type="entry name" value="Vaccinia Virus protein VP39"/>
    <property type="match status" value="2"/>
</dbReference>
<dbReference type="HAMAP" id="MF_01862">
    <property type="entry name" value="16SrRNA_methyltr_C"/>
    <property type="match status" value="1"/>
</dbReference>
<dbReference type="InterPro" id="IPR002052">
    <property type="entry name" value="DNA_methylase_N6_adenine_CS"/>
</dbReference>
<dbReference type="InterPro" id="IPR013675">
    <property type="entry name" value="Mtase_sm_N"/>
</dbReference>
<dbReference type="InterPro" id="IPR023543">
    <property type="entry name" value="rRNA_ssu_MeTfrase_C"/>
</dbReference>
<dbReference type="InterPro" id="IPR046977">
    <property type="entry name" value="RsmC/RlmG"/>
</dbReference>
<dbReference type="InterPro" id="IPR029063">
    <property type="entry name" value="SAM-dependent_MTases_sf"/>
</dbReference>
<dbReference type="InterPro" id="IPR007848">
    <property type="entry name" value="Small_mtfrase_dom"/>
</dbReference>
<dbReference type="PANTHER" id="PTHR47816">
    <property type="entry name" value="RIBOSOMAL RNA SMALL SUBUNIT METHYLTRANSFERASE C"/>
    <property type="match status" value="1"/>
</dbReference>
<dbReference type="PANTHER" id="PTHR47816:SF4">
    <property type="entry name" value="RIBOSOMAL RNA SMALL SUBUNIT METHYLTRANSFERASE C"/>
    <property type="match status" value="1"/>
</dbReference>
<dbReference type="Pfam" id="PF05175">
    <property type="entry name" value="MTS"/>
    <property type="match status" value="1"/>
</dbReference>
<dbReference type="Pfam" id="PF08468">
    <property type="entry name" value="MTS_N"/>
    <property type="match status" value="1"/>
</dbReference>
<dbReference type="SUPFAM" id="SSF53335">
    <property type="entry name" value="S-adenosyl-L-methionine-dependent methyltransferases"/>
    <property type="match status" value="1"/>
</dbReference>
<keyword id="KW-0963">Cytoplasm</keyword>
<keyword id="KW-0489">Methyltransferase</keyword>
<keyword id="KW-1185">Reference proteome</keyword>
<keyword id="KW-0698">rRNA processing</keyword>
<keyword id="KW-0949">S-adenosyl-L-methionine</keyword>
<keyword id="KW-0808">Transferase</keyword>
<comment type="function">
    <text evidence="1">Specifically methylates the guanine in position 1207 of 16S rRNA in the 30S particle.</text>
</comment>
<comment type="catalytic activity">
    <reaction evidence="1">
        <text>guanosine(1207) in 16S rRNA + S-adenosyl-L-methionine = N(2)-methylguanosine(1207) in 16S rRNA + S-adenosyl-L-homocysteine + H(+)</text>
        <dbReference type="Rhea" id="RHEA:42736"/>
        <dbReference type="Rhea" id="RHEA-COMP:10213"/>
        <dbReference type="Rhea" id="RHEA-COMP:10214"/>
        <dbReference type="ChEBI" id="CHEBI:15378"/>
        <dbReference type="ChEBI" id="CHEBI:57856"/>
        <dbReference type="ChEBI" id="CHEBI:59789"/>
        <dbReference type="ChEBI" id="CHEBI:74269"/>
        <dbReference type="ChEBI" id="CHEBI:74481"/>
        <dbReference type="EC" id="2.1.1.172"/>
    </reaction>
</comment>
<comment type="subunit">
    <text evidence="1">Monomer.</text>
</comment>
<comment type="subcellular location">
    <subcellularLocation>
        <location evidence="1">Cytoplasm</location>
    </subcellularLocation>
</comment>
<comment type="similarity">
    <text evidence="1">Belongs to the methyltransferase superfamily. RsmC family.</text>
</comment>
<reference key="1">
    <citation type="journal article" date="2008" name="Proc. Natl. Acad. Sci. U.S.A.">
        <title>Nitrogen fixation island and rhizosphere competence traits in the genome of root-associated Pseudomonas stutzeri A1501.</title>
        <authorList>
            <person name="Yan Y."/>
            <person name="Yang J."/>
            <person name="Dou Y."/>
            <person name="Chen M."/>
            <person name="Ping S."/>
            <person name="Peng J."/>
            <person name="Lu W."/>
            <person name="Zhang W."/>
            <person name="Yao Z."/>
            <person name="Li H."/>
            <person name="Liu W."/>
            <person name="He S."/>
            <person name="Geng L."/>
            <person name="Zhang X."/>
            <person name="Yang F."/>
            <person name="Yu H."/>
            <person name="Zhan Y."/>
            <person name="Li D."/>
            <person name="Lin Z."/>
            <person name="Wang Y."/>
            <person name="Elmerich C."/>
            <person name="Lin M."/>
            <person name="Jin Q."/>
        </authorList>
    </citation>
    <scope>NUCLEOTIDE SEQUENCE [LARGE SCALE GENOMIC DNA]</scope>
    <source>
        <strain>A1501</strain>
    </source>
</reference>
<organism>
    <name type="scientific">Stutzerimonas stutzeri (strain A1501)</name>
    <name type="common">Pseudomonas stutzeri</name>
    <dbReference type="NCBI Taxonomy" id="379731"/>
    <lineage>
        <taxon>Bacteria</taxon>
        <taxon>Pseudomonadati</taxon>
        <taxon>Pseudomonadota</taxon>
        <taxon>Gammaproteobacteria</taxon>
        <taxon>Pseudomonadales</taxon>
        <taxon>Pseudomonadaceae</taxon>
        <taxon>Stutzerimonas</taxon>
    </lineage>
</organism>
<proteinExistence type="inferred from homology"/>
<accession>A4VIL0</accession>
<protein>
    <recommendedName>
        <fullName evidence="1">Ribosomal RNA small subunit methyltransferase C</fullName>
        <ecNumber evidence="1">2.1.1.172</ecNumber>
    </recommendedName>
    <alternativeName>
        <fullName evidence="1">16S rRNA m2G1207 methyltransferase</fullName>
    </alternativeName>
    <alternativeName>
        <fullName evidence="1">rRNA (guanine-N(2)-)-methyltransferase RsmC</fullName>
    </alternativeName>
</protein>
<name>RSMC_STUS1</name>
<gene>
    <name evidence="1" type="primary">rsmC</name>
    <name type="ordered locus">PST_1116</name>
</gene>
<evidence type="ECO:0000255" key="1">
    <source>
        <dbReference type="HAMAP-Rule" id="MF_01862"/>
    </source>
</evidence>
<feature type="chain" id="PRO_0000369746" description="Ribosomal RNA small subunit methyltransferase C">
    <location>
        <begin position="1"/>
        <end position="332"/>
    </location>
</feature>